<protein>
    <recommendedName>
        <fullName evidence="9">Alpha-(1,3)-fucosyltransferase fut-6</fullName>
        <ecNumber evidence="5 6">2.4.1.-</ecNumber>
    </recommendedName>
</protein>
<keyword id="KW-0325">Glycoprotein</keyword>
<keyword id="KW-0328">Glycosyltransferase</keyword>
<keyword id="KW-0333">Golgi apparatus</keyword>
<keyword id="KW-0472">Membrane</keyword>
<keyword id="KW-1185">Reference proteome</keyword>
<keyword id="KW-0735">Signal-anchor</keyword>
<keyword id="KW-0808">Transferase</keyword>
<keyword id="KW-0812">Transmembrane</keyword>
<keyword id="KW-1133">Transmembrane helix</keyword>
<name>FUTE_CAEEL</name>
<evidence type="ECO:0000255" key="1"/>
<evidence type="ECO:0000255" key="2">
    <source>
        <dbReference type="PROSITE-ProRule" id="PRU00498"/>
    </source>
</evidence>
<evidence type="ECO:0000255" key="3">
    <source>
        <dbReference type="RuleBase" id="RU003832"/>
    </source>
</evidence>
<evidence type="ECO:0000269" key="4">
    <source>
    </source>
</evidence>
<evidence type="ECO:0000269" key="5">
    <source>
    </source>
</evidence>
<evidence type="ECO:0000269" key="6">
    <source>
    </source>
</evidence>
<evidence type="ECO:0000269" key="7">
    <source>
    </source>
</evidence>
<evidence type="ECO:0000269" key="8">
    <source>
    </source>
</evidence>
<evidence type="ECO:0000303" key="9">
    <source>
    </source>
</evidence>
<evidence type="ECO:0000305" key="10"/>
<evidence type="ECO:0000312" key="11">
    <source>
        <dbReference type="EMBL" id="CAG32980.1"/>
    </source>
</evidence>
<evidence type="ECO:0000312" key="12">
    <source>
        <dbReference type="Proteomes" id="UP000001940"/>
    </source>
</evidence>
<evidence type="ECO:0000312" key="13">
    <source>
        <dbReference type="WormBase" id="T05A7.5"/>
    </source>
</evidence>
<comment type="function">
    <text evidence="4 5 6 7 8">Involved in the fucosylation of N-glycans (PubMed:15364955, PubMed:17369288, PubMed:23754284, PubMed:26002521, PubMed:26538210). Preferentially catalyzes the addition of fucose in alpha 1-3 linkage to the distal GlcNAc residue in N-glycans (PubMed:23754284). Catalyzes the transfer of fucose to Gal-beta-1-4-GlcNAc-alpha-pNP (LN-pNP) and Gal-beta-1-4-GlcNAc-beta-1-3-Gal-beta-1-4-Glc (LNnT) (PubMed:17369288). Unlike alpha-(1,3)-fucosyltransferase fut-1, does not transfer fucose to Man-alpha-1-3-(Man-alpha-1-6)-Man-beta-1-4-GlcNAc-beta-1-4-GlcNAc-beta-1-Asn (M3), Man-alpha-1-3-(Man-alpha-1-6)-Man-beta-1-4-GlcNAc-beta-1-4-(Fuc-alpha-1-6)-GlcNAc-beta-1-Asn (M3F6) and GlcNAc-beta-1-2-Man-alpha-1-3-(GlcNAc-beta-1-2-Man-alpha-1-6)-Man-beta-1-4-GlcNAc-beta-1-4(Fuc-alpha-1-6)-GlcNAc-beta-1-Asn (GnM3F6) (PubMed:17369288).</text>
</comment>
<comment type="cofactor">
    <text evidence="5">Unlike other alpha-(1,3)-fucosyltransferases, appears not to require a divalent metal cation as cofactor.</text>
</comment>
<comment type="activity regulation">
    <text evidence="5">Inhibited by divalent metal cations.</text>
</comment>
<comment type="biophysicochemical properties">
    <temperatureDependence>
        <text evidence="5">Optimum temperature is 23 degrees Celsius. Very low activity at 37 degrees Celsius.</text>
    </temperatureDependence>
</comment>
<comment type="pathway">
    <text evidence="5 6 7 8">Protein modification; protein glycosylation.</text>
</comment>
<comment type="subcellular location">
    <subcellularLocation>
        <location evidence="3">Golgi apparatus</location>
        <location evidence="3">Golgi stack membrane</location>
        <topology evidence="3">Single-pass type II membrane protein</topology>
    </subcellularLocation>
</comment>
<comment type="developmental stage">
    <text evidence="5">Expressed in larvae and adult.</text>
</comment>
<comment type="disruption phenotype">
    <text evidence="4 5 7 8">No visible phenotype (PubMed:17369288). Loss of several tetra-fucosylated N-glycans (PubMed:15364955). Loss of tetra- and tri-fucosylated N-glycans in a fut-8 or fut-1 mutant background (PubMed:26538210). fut-1, fut-6 and fut-8 triple mutants lack all N-glycan core fucose with only one fucose present in the bisecting galactose, thus resulting in the loss of tetra-, tri- and bi-fucosylated N-glycans (PubMed:26002521).</text>
</comment>
<comment type="similarity">
    <text evidence="3">Belongs to the glycosyltransferase 10 family.</text>
</comment>
<sequence length="392" mass="45226">MSQIGGATCTWRYLGRFVTLGIYASVALFVWYTLVPTRSKHKDSIAINNNNADPATALIPVHTKNVVIYAATKFFGHPITTERFLATCPDVQNYCRITQEESEFDNADAVLFHNADYRGSTDKFKKMKSQRKPGVPYVLWSLESPTNDMFRPDSHMINWTMTYRTDSDVWAPYGTIVKLKNPVEVDLNAIWEGKTKTATWLASNCITQNHRFDLIKKIIDNGFEIDIWGNCGKQVSQCAGVDNQESPCVLELIKPYKFYISMENSNCKDYVTEKFWKALNDRMTIPIVLARKYYKDLGVPDSAYIAVDDYATLDEFLAHVKKVNKEKDLFLSYHQWRKEWKVIIGSGFSGWCTLCNKLQDKDYILKNPKSYKDVAWWHSFEMCNNQIASKYL</sequence>
<reference evidence="11" key="1">
    <citation type="journal article" date="2004" name="J. Biol. Chem.">
        <title>Molecular basis of anti-horseradish peroxidase staining in Caenorhabditis elegans.</title>
        <authorList>
            <person name="Paschinger K."/>
            <person name="Rendic D."/>
            <person name="Lochnit G."/>
            <person name="Jantsch V."/>
            <person name="Wilson I.B.H."/>
        </authorList>
    </citation>
    <scope>NUCLEOTIDE SEQUENCE [MRNA]</scope>
    <scope>FUNCTION</scope>
    <scope>DISRUPTION PHENOTYPE</scope>
</reference>
<reference evidence="12" key="2">
    <citation type="journal article" date="1998" name="Science">
        <title>Genome sequence of the nematode C. elegans: a platform for investigating biology.</title>
        <authorList>
            <consortium name="The C. elegans sequencing consortium"/>
        </authorList>
    </citation>
    <scope>NUCLEOTIDE SEQUENCE [LARGE SCALE GENOMIC DNA]</scope>
    <source>
        <strain evidence="12">Bristol N2</strain>
    </source>
</reference>
<reference evidence="10" key="3">
    <citation type="journal article" date="2007" name="Glycobiology">
        <title>Molecular cloning and characterization of the Caenorhabditis elegans alpha1,3-fucosyltransferase family.</title>
        <authorList>
            <person name="Nguyen K."/>
            <person name="van Die I."/>
            <person name="Grundahl K.M."/>
            <person name="Kawar Z.S."/>
            <person name="Cummings R.D."/>
        </authorList>
    </citation>
    <scope>FUNCTION</scope>
    <scope>CATALYTIC ACTIVITY</scope>
    <scope>COFACTOR</scope>
    <scope>ACTIVITY REGULATION</scope>
    <scope>BIOPHYSICOCHEMICAL PROPERTIES</scope>
    <scope>PATHWAY</scope>
    <scope>TISSUE SPECIFICITY</scope>
    <scope>DEVELOPMENTAL STAGE</scope>
    <scope>GLYCOSYLATION</scope>
    <scope>DISRUPTION PHENOTYPE</scope>
</reference>
<reference evidence="10" key="4">
    <citation type="journal article" date="2013" name="J. Biol. Chem.">
        <title>Array-assisted characterization of a fucosyltransferase required for the biosynthesis of complex core modifications of nematode N-glycans.</title>
        <authorList>
            <person name="Yan S."/>
            <person name="Serna S."/>
            <person name="Reichardt N.C."/>
            <person name="Paschinger K."/>
            <person name="Wilson I.B."/>
        </authorList>
    </citation>
    <scope>FUNCTION</scope>
    <scope>PATHWAY</scope>
    <scope>CATALYTIC ACTIVITY</scope>
</reference>
<reference evidence="10" key="5">
    <citation type="journal article" date="2015" name="J. Proteome Res.">
        <title>Comparisons of Caenorhabditis fucosyltransferase mutants reveal a multiplicity of isomeric N-Glycan structures.</title>
        <authorList>
            <person name="Yan S."/>
            <person name="Jin C."/>
            <person name="Wilson I.B."/>
            <person name="Paschinger K."/>
        </authorList>
    </citation>
    <scope>FUNCTION</scope>
    <scope>PATHWAY</scope>
    <scope>DISRUPTION PHENOTYPE</scope>
</reference>
<reference evidence="10" key="6">
    <citation type="journal article" date="2015" name="Mol. Cell. Proteomics">
        <title>Bisecting Galactose as a Feature of N-Glycans of Wild-type and Mutant Caenorhabditis elegans.</title>
        <authorList>
            <person name="Yan S."/>
            <person name="Brecker L."/>
            <person name="Jin C."/>
            <person name="Titz A."/>
            <person name="Dragosits M."/>
            <person name="Karlsson N.G."/>
            <person name="Jantsch V."/>
            <person name="Wilson I.B."/>
            <person name="Paschinger K."/>
        </authorList>
    </citation>
    <scope>FUNCTION</scope>
    <scope>PATHWAY</scope>
    <scope>DISRUPTION PHENOTYPE</scope>
</reference>
<dbReference type="EC" id="2.4.1.-" evidence="5 6"/>
<dbReference type="EMBL" id="AJ745074">
    <property type="protein sequence ID" value="CAG32980.1"/>
    <property type="molecule type" value="mRNA"/>
</dbReference>
<dbReference type="EMBL" id="BX284602">
    <property type="protein sequence ID" value="CCD69223.1"/>
    <property type="molecule type" value="Genomic_DNA"/>
</dbReference>
<dbReference type="PIR" id="T16799">
    <property type="entry name" value="T16799"/>
</dbReference>
<dbReference type="RefSeq" id="NP_494823.2">
    <property type="nucleotide sequence ID" value="NM_062422.7"/>
</dbReference>
<dbReference type="SMR" id="G5EEE1"/>
<dbReference type="FunCoup" id="G5EEE1">
    <property type="interactions" value="190"/>
</dbReference>
<dbReference type="STRING" id="6239.T05A7.5.1"/>
<dbReference type="CAZy" id="GT10">
    <property type="family name" value="Glycosyltransferase Family 10"/>
</dbReference>
<dbReference type="GlyCosmos" id="G5EEE1">
    <property type="glycosylation" value="1 site, No reported glycans"/>
</dbReference>
<dbReference type="PaxDb" id="6239-T05A7.5"/>
<dbReference type="PeptideAtlas" id="G5EEE1"/>
<dbReference type="EnsemblMetazoa" id="T05A7.5.1">
    <property type="protein sequence ID" value="T05A7.5.1"/>
    <property type="gene ID" value="WBGene00020222"/>
</dbReference>
<dbReference type="GeneID" id="188084"/>
<dbReference type="KEGG" id="cel:CELE_T05A7.5"/>
<dbReference type="AGR" id="WB:WBGene00020222"/>
<dbReference type="CTD" id="188084"/>
<dbReference type="WormBase" id="T05A7.5">
    <property type="protein sequence ID" value="CE32206"/>
    <property type="gene ID" value="WBGene00020222"/>
    <property type="gene designation" value="fut-6"/>
</dbReference>
<dbReference type="eggNOG" id="KOG2619">
    <property type="taxonomic scope" value="Eukaryota"/>
</dbReference>
<dbReference type="HOGENOM" id="CLU_032075_3_0_1"/>
<dbReference type="InParanoid" id="G5EEE1"/>
<dbReference type="OMA" id="WKALNDR"/>
<dbReference type="OrthoDB" id="5912041at2759"/>
<dbReference type="PhylomeDB" id="G5EEE1"/>
<dbReference type="UniPathway" id="UPA00378"/>
<dbReference type="PRO" id="PR:G5EEE1"/>
<dbReference type="Proteomes" id="UP000001940">
    <property type="component" value="Chromosome II"/>
</dbReference>
<dbReference type="Bgee" id="WBGene00020222">
    <property type="expression patterns" value="Expressed in adult organism and 3 other cell types or tissues"/>
</dbReference>
<dbReference type="GO" id="GO:0032580">
    <property type="term" value="C:Golgi cisterna membrane"/>
    <property type="evidence" value="ECO:0007669"/>
    <property type="project" value="UniProtKB-SubCell"/>
</dbReference>
<dbReference type="GO" id="GO:0046920">
    <property type="term" value="F:alpha-(1-&gt;3)-fucosyltransferase activity"/>
    <property type="evidence" value="ECO:0000314"/>
    <property type="project" value="UniProtKB"/>
</dbReference>
<dbReference type="GO" id="GO:0008417">
    <property type="term" value="F:fucosyltransferase activity"/>
    <property type="evidence" value="ECO:0000316"/>
    <property type="project" value="UniProtKB"/>
</dbReference>
<dbReference type="GO" id="GO:0036065">
    <property type="term" value="P:fucosylation"/>
    <property type="evidence" value="ECO:0000314"/>
    <property type="project" value="UniProtKB"/>
</dbReference>
<dbReference type="GO" id="GO:0006486">
    <property type="term" value="P:protein glycosylation"/>
    <property type="evidence" value="ECO:0007669"/>
    <property type="project" value="UniProtKB-UniPathway"/>
</dbReference>
<dbReference type="FunFam" id="3.40.50.11660:FF:000002">
    <property type="entry name" value="Alpha-(1,3)-fucosyltransferase"/>
    <property type="match status" value="1"/>
</dbReference>
<dbReference type="Gene3D" id="3.40.50.11660">
    <property type="entry name" value="Glycosyl transferase family 10, C-terminal domain"/>
    <property type="match status" value="1"/>
</dbReference>
<dbReference type="InterPro" id="IPR055270">
    <property type="entry name" value="Glyco_tran_10_C"/>
</dbReference>
<dbReference type="InterPro" id="IPR031481">
    <property type="entry name" value="Glyco_tran_10_N"/>
</dbReference>
<dbReference type="InterPro" id="IPR001503">
    <property type="entry name" value="Glyco_trans_10"/>
</dbReference>
<dbReference type="InterPro" id="IPR038577">
    <property type="entry name" value="GT10-like_C_sf"/>
</dbReference>
<dbReference type="PANTHER" id="PTHR48438">
    <property type="entry name" value="ALPHA-(1,3)-FUCOSYLTRANSFERASE C-RELATED"/>
    <property type="match status" value="1"/>
</dbReference>
<dbReference type="PANTHER" id="PTHR48438:SF1">
    <property type="entry name" value="ALPHA-(1,3)-FUCOSYLTRANSFERASE C-RELATED"/>
    <property type="match status" value="1"/>
</dbReference>
<dbReference type="Pfam" id="PF17039">
    <property type="entry name" value="Glyco_tran_10_N"/>
    <property type="match status" value="1"/>
</dbReference>
<dbReference type="Pfam" id="PF00852">
    <property type="entry name" value="Glyco_transf_10"/>
    <property type="match status" value="1"/>
</dbReference>
<dbReference type="SUPFAM" id="SSF53756">
    <property type="entry name" value="UDP-Glycosyltransferase/glycogen phosphorylase"/>
    <property type="match status" value="1"/>
</dbReference>
<organism evidence="12">
    <name type="scientific">Caenorhabditis elegans</name>
    <dbReference type="NCBI Taxonomy" id="6239"/>
    <lineage>
        <taxon>Eukaryota</taxon>
        <taxon>Metazoa</taxon>
        <taxon>Ecdysozoa</taxon>
        <taxon>Nematoda</taxon>
        <taxon>Chromadorea</taxon>
        <taxon>Rhabditida</taxon>
        <taxon>Rhabditina</taxon>
        <taxon>Rhabditomorpha</taxon>
        <taxon>Rhabditoidea</taxon>
        <taxon>Rhabditidae</taxon>
        <taxon>Peloderinae</taxon>
        <taxon>Caenorhabditis</taxon>
    </lineage>
</organism>
<feature type="chain" id="PRO_0000438422" description="Alpha-(1,3)-fucosyltransferase fut-6" evidence="10">
    <location>
        <begin position="1"/>
        <end position="392"/>
    </location>
</feature>
<feature type="topological domain" description="Cytoplasmic" evidence="10">
    <location>
        <begin position="1"/>
        <end position="12"/>
    </location>
</feature>
<feature type="transmembrane region" description="Helical; Signal-anchor for type II membrane protein" evidence="1">
    <location>
        <begin position="13"/>
        <end position="35"/>
    </location>
</feature>
<feature type="topological domain" description="Lumenal" evidence="10">
    <location>
        <begin position="36"/>
        <end position="392"/>
    </location>
</feature>
<feature type="glycosylation site" description="N-linked (GlcNAc...) asparagine" evidence="2">
    <location>
        <position position="158"/>
    </location>
</feature>
<gene>
    <name evidence="13" type="primary">fut-6</name>
    <name evidence="9" type="synonym">CEFT-3</name>
    <name evidence="13" type="ORF">T05A7.5</name>
</gene>
<accession>G5EEE1</accession>
<proteinExistence type="evidence at protein level"/>